<organism>
    <name type="scientific">Homo sapiens</name>
    <name type="common">Human</name>
    <dbReference type="NCBI Taxonomy" id="9606"/>
    <lineage>
        <taxon>Eukaryota</taxon>
        <taxon>Metazoa</taxon>
        <taxon>Chordata</taxon>
        <taxon>Craniata</taxon>
        <taxon>Vertebrata</taxon>
        <taxon>Euteleostomi</taxon>
        <taxon>Mammalia</taxon>
        <taxon>Eutheria</taxon>
        <taxon>Euarchontoglires</taxon>
        <taxon>Primates</taxon>
        <taxon>Haplorrhini</taxon>
        <taxon>Catarrhini</taxon>
        <taxon>Hominidae</taxon>
        <taxon>Homo</taxon>
    </lineage>
</organism>
<proteinExistence type="evidence at protein level"/>
<evidence type="ECO:0000255" key="1"/>
<evidence type="ECO:0000256" key="2">
    <source>
        <dbReference type="SAM" id="MobiDB-lite"/>
    </source>
</evidence>
<evidence type="ECO:0000269" key="3">
    <source>
    </source>
</evidence>
<evidence type="ECO:0000269" key="4">
    <source>
    </source>
</evidence>
<evidence type="ECO:0000305" key="5"/>
<evidence type="ECO:0000305" key="6">
    <source>
    </source>
</evidence>
<evidence type="ECO:0007744" key="7">
    <source>
    </source>
</evidence>
<evidence type="ECO:0007744" key="8">
    <source>
    </source>
</evidence>
<evidence type="ECO:0007744" key="9">
    <source>
    </source>
</evidence>
<evidence type="ECO:0007744" key="10">
    <source>
    </source>
</evidence>
<evidence type="ECO:0007744" key="11">
    <source>
    </source>
</evidence>
<evidence type="ECO:0007744" key="12">
    <source>
    </source>
</evidence>
<keyword id="KW-0175">Coiled coil</keyword>
<keyword id="KW-0268">Exocytosis</keyword>
<keyword id="KW-0597">Phosphoprotein</keyword>
<keyword id="KW-1267">Proteomics identification</keyword>
<keyword id="KW-1185">Reference proteome</keyword>
<reference key="1">
    <citation type="journal article" date="2003" name="Genes Cells">
        <title>Taxilin; a novel syntaxin-binding protein that is involved in Ca2+-dependent exocytosis in neuroendocrine cells.</title>
        <authorList>
            <person name="Nogami S."/>
            <person name="Satoh S."/>
            <person name="Nakano M."/>
            <person name="Shimizu H."/>
            <person name="Fukushima H."/>
            <person name="Maruyama A."/>
            <person name="Terano A."/>
            <person name="Shirataki H."/>
        </authorList>
    </citation>
    <scope>NUCLEOTIDE SEQUENCE [MRNA]</scope>
    <scope>INTERACTION WITH SYNTAXIN</scope>
    <scope>TISSUE SPECIFICITY</scope>
    <source>
        <tissue>Brain</tissue>
    </source>
</reference>
<reference key="2">
    <citation type="journal article" date="2007" name="BMC Genomics">
        <title>The full-ORF clone resource of the German cDNA consortium.</title>
        <authorList>
            <person name="Bechtel S."/>
            <person name="Rosenfelder H."/>
            <person name="Duda A."/>
            <person name="Schmidt C.P."/>
            <person name="Ernst U."/>
            <person name="Wellenreuther R."/>
            <person name="Mehrle A."/>
            <person name="Schuster C."/>
            <person name="Bahr A."/>
            <person name="Bloecker H."/>
            <person name="Heubner D."/>
            <person name="Hoerlein A."/>
            <person name="Michel G."/>
            <person name="Wedler H."/>
            <person name="Koehrer K."/>
            <person name="Ottenwaelder B."/>
            <person name="Poustka A."/>
            <person name="Wiemann S."/>
            <person name="Schupp I."/>
        </authorList>
    </citation>
    <scope>NUCLEOTIDE SEQUENCE [LARGE SCALE MRNA]</scope>
    <source>
        <tissue>Skeletal muscle</tissue>
        <tissue>Spinal cord</tissue>
    </source>
</reference>
<reference key="3">
    <citation type="journal article" date="2006" name="Nature">
        <title>The DNA sequence and biological annotation of human chromosome 1.</title>
        <authorList>
            <person name="Gregory S.G."/>
            <person name="Barlow K.F."/>
            <person name="McLay K.E."/>
            <person name="Kaul R."/>
            <person name="Swarbreck D."/>
            <person name="Dunham A."/>
            <person name="Scott C.E."/>
            <person name="Howe K.L."/>
            <person name="Woodfine K."/>
            <person name="Spencer C.C.A."/>
            <person name="Jones M.C."/>
            <person name="Gillson C."/>
            <person name="Searle S."/>
            <person name="Zhou Y."/>
            <person name="Kokocinski F."/>
            <person name="McDonald L."/>
            <person name="Evans R."/>
            <person name="Phillips K."/>
            <person name="Atkinson A."/>
            <person name="Cooper R."/>
            <person name="Jones C."/>
            <person name="Hall R.E."/>
            <person name="Andrews T.D."/>
            <person name="Lloyd C."/>
            <person name="Ainscough R."/>
            <person name="Almeida J.P."/>
            <person name="Ambrose K.D."/>
            <person name="Anderson F."/>
            <person name="Andrew R.W."/>
            <person name="Ashwell R.I.S."/>
            <person name="Aubin K."/>
            <person name="Babbage A.K."/>
            <person name="Bagguley C.L."/>
            <person name="Bailey J."/>
            <person name="Beasley H."/>
            <person name="Bethel G."/>
            <person name="Bird C.P."/>
            <person name="Bray-Allen S."/>
            <person name="Brown J.Y."/>
            <person name="Brown A.J."/>
            <person name="Buckley D."/>
            <person name="Burton J."/>
            <person name="Bye J."/>
            <person name="Carder C."/>
            <person name="Chapman J.C."/>
            <person name="Clark S.Y."/>
            <person name="Clarke G."/>
            <person name="Clee C."/>
            <person name="Cobley V."/>
            <person name="Collier R.E."/>
            <person name="Corby N."/>
            <person name="Coville G.J."/>
            <person name="Davies J."/>
            <person name="Deadman R."/>
            <person name="Dunn M."/>
            <person name="Earthrowl M."/>
            <person name="Ellington A.G."/>
            <person name="Errington H."/>
            <person name="Frankish A."/>
            <person name="Frankland J."/>
            <person name="French L."/>
            <person name="Garner P."/>
            <person name="Garnett J."/>
            <person name="Gay L."/>
            <person name="Ghori M.R.J."/>
            <person name="Gibson R."/>
            <person name="Gilby L.M."/>
            <person name="Gillett W."/>
            <person name="Glithero R.J."/>
            <person name="Grafham D.V."/>
            <person name="Griffiths C."/>
            <person name="Griffiths-Jones S."/>
            <person name="Grocock R."/>
            <person name="Hammond S."/>
            <person name="Harrison E.S.I."/>
            <person name="Hart E."/>
            <person name="Haugen E."/>
            <person name="Heath P.D."/>
            <person name="Holmes S."/>
            <person name="Holt K."/>
            <person name="Howden P.J."/>
            <person name="Hunt A.R."/>
            <person name="Hunt S.E."/>
            <person name="Hunter G."/>
            <person name="Isherwood J."/>
            <person name="James R."/>
            <person name="Johnson C."/>
            <person name="Johnson D."/>
            <person name="Joy A."/>
            <person name="Kay M."/>
            <person name="Kershaw J.K."/>
            <person name="Kibukawa M."/>
            <person name="Kimberley A.M."/>
            <person name="King A."/>
            <person name="Knights A.J."/>
            <person name="Lad H."/>
            <person name="Laird G."/>
            <person name="Lawlor S."/>
            <person name="Leongamornlert D.A."/>
            <person name="Lloyd D.M."/>
            <person name="Loveland J."/>
            <person name="Lovell J."/>
            <person name="Lush M.J."/>
            <person name="Lyne R."/>
            <person name="Martin S."/>
            <person name="Mashreghi-Mohammadi M."/>
            <person name="Matthews L."/>
            <person name="Matthews N.S.W."/>
            <person name="McLaren S."/>
            <person name="Milne S."/>
            <person name="Mistry S."/>
            <person name="Moore M.J.F."/>
            <person name="Nickerson T."/>
            <person name="O'Dell C.N."/>
            <person name="Oliver K."/>
            <person name="Palmeiri A."/>
            <person name="Palmer S.A."/>
            <person name="Parker A."/>
            <person name="Patel D."/>
            <person name="Pearce A.V."/>
            <person name="Peck A.I."/>
            <person name="Pelan S."/>
            <person name="Phelps K."/>
            <person name="Phillimore B.J."/>
            <person name="Plumb R."/>
            <person name="Rajan J."/>
            <person name="Raymond C."/>
            <person name="Rouse G."/>
            <person name="Saenphimmachak C."/>
            <person name="Sehra H.K."/>
            <person name="Sheridan E."/>
            <person name="Shownkeen R."/>
            <person name="Sims S."/>
            <person name="Skuce C.D."/>
            <person name="Smith M."/>
            <person name="Steward C."/>
            <person name="Subramanian S."/>
            <person name="Sycamore N."/>
            <person name="Tracey A."/>
            <person name="Tromans A."/>
            <person name="Van Helmond Z."/>
            <person name="Wall M."/>
            <person name="Wallis J.M."/>
            <person name="White S."/>
            <person name="Whitehead S.L."/>
            <person name="Wilkinson J.E."/>
            <person name="Willey D.L."/>
            <person name="Williams H."/>
            <person name="Wilming L."/>
            <person name="Wray P.W."/>
            <person name="Wu Z."/>
            <person name="Coulson A."/>
            <person name="Vaudin M."/>
            <person name="Sulston J.E."/>
            <person name="Durbin R.M."/>
            <person name="Hubbard T."/>
            <person name="Wooster R."/>
            <person name="Dunham I."/>
            <person name="Carter N.P."/>
            <person name="McVean G."/>
            <person name="Ross M.T."/>
            <person name="Harrow J."/>
            <person name="Olson M.V."/>
            <person name="Beck S."/>
            <person name="Rogers J."/>
            <person name="Bentley D.R."/>
        </authorList>
    </citation>
    <scope>NUCLEOTIDE SEQUENCE [LARGE SCALE GENOMIC DNA]</scope>
</reference>
<reference key="4">
    <citation type="submission" date="2005-09" db="EMBL/GenBank/DDBJ databases">
        <authorList>
            <person name="Mural R.J."/>
            <person name="Istrail S."/>
            <person name="Sutton G.G."/>
            <person name="Florea L."/>
            <person name="Halpern A.L."/>
            <person name="Mobarry C.M."/>
            <person name="Lippert R."/>
            <person name="Walenz B."/>
            <person name="Shatkay H."/>
            <person name="Dew I."/>
            <person name="Miller J.R."/>
            <person name="Flanigan M.J."/>
            <person name="Edwards N.J."/>
            <person name="Bolanos R."/>
            <person name="Fasulo D."/>
            <person name="Halldorsson B.V."/>
            <person name="Hannenhalli S."/>
            <person name="Turner R."/>
            <person name="Yooseph S."/>
            <person name="Lu F."/>
            <person name="Nusskern D.R."/>
            <person name="Shue B.C."/>
            <person name="Zheng X.H."/>
            <person name="Zhong F."/>
            <person name="Delcher A.L."/>
            <person name="Huson D.H."/>
            <person name="Kravitz S.A."/>
            <person name="Mouchard L."/>
            <person name="Reinert K."/>
            <person name="Remington K.A."/>
            <person name="Clark A.G."/>
            <person name="Waterman M.S."/>
            <person name="Eichler E.E."/>
            <person name="Adams M.D."/>
            <person name="Hunkapiller M.W."/>
            <person name="Myers E.W."/>
            <person name="Venter J.C."/>
        </authorList>
    </citation>
    <scope>NUCLEOTIDE SEQUENCE [LARGE SCALE GENOMIC DNA]</scope>
</reference>
<reference key="5">
    <citation type="journal article" date="2004" name="Genome Res.">
        <title>The status, quality, and expansion of the NIH full-length cDNA project: the Mammalian Gene Collection (MGC).</title>
        <authorList>
            <consortium name="The MGC Project Team"/>
        </authorList>
    </citation>
    <scope>NUCLEOTIDE SEQUENCE [LARGE SCALE MRNA]</scope>
    <source>
        <tissue>Ovary</tissue>
        <tissue>Placenta</tissue>
        <tissue>Uterus</tissue>
    </source>
</reference>
<reference key="6">
    <citation type="journal article" date="1993" name="Proc. Natl. Acad. Sci. U.S.A.">
        <title>Identification of a cDNA for a human high-molecular-weight B-cell growth factor.</title>
        <authorList>
            <person name="Ambrus J.L. Jr."/>
            <person name="Pippin J."/>
            <person name="Joseph A."/>
            <person name="Xu C."/>
            <person name="Blumenthal D."/>
            <person name="Tamayo A."/>
            <person name="Claypool K."/>
            <person name="McCourt D."/>
            <person name="Srikiatchatochorn A."/>
            <person name="Ford R.J."/>
        </authorList>
    </citation>
    <scope>NUCLEOTIDE SEQUENCE [MRNA] OF 234-546</scope>
</reference>
<reference key="7">
    <citation type="journal article" date="1996" name="Proc. Natl. Acad. Sci. U.S.A.">
        <authorList>
            <person name="Ambrus J.L. Jr."/>
            <person name="Pippin J."/>
            <person name="Joseph A."/>
            <person name="Xu C."/>
            <person name="Blumenthal D."/>
            <person name="Tamayo A."/>
            <person name="Claypool K."/>
            <person name="McCourt D."/>
            <person name="Srikiatchatochorn A."/>
            <person name="Ford R.J."/>
        </authorList>
    </citation>
    <scope>ERRATUM OF PUBMED:8327514</scope>
</reference>
<reference key="8">
    <citation type="journal article" date="2003" name="Biochem. Biophys. Res. Commun.">
        <title>Interaction of taxilin with syntaxin which does not form the SNARE complex.</title>
        <authorList>
            <person name="Nogami S."/>
            <person name="Satoh S."/>
            <person name="Nakano M."/>
            <person name="Terano A."/>
            <person name="Shirataki H."/>
        </authorList>
    </citation>
    <scope>INTERACTION WITH STX1A; STX3A AND STX4A</scope>
</reference>
<reference key="9">
    <citation type="journal article" date="2006" name="Cell">
        <title>Global, in vivo, and site-specific phosphorylation dynamics in signaling networks.</title>
        <authorList>
            <person name="Olsen J.V."/>
            <person name="Blagoev B."/>
            <person name="Gnad F."/>
            <person name="Macek B."/>
            <person name="Kumar C."/>
            <person name="Mortensen P."/>
            <person name="Mann M."/>
        </authorList>
    </citation>
    <scope>IDENTIFICATION BY MASS SPECTROMETRY [LARGE SCALE ANALYSIS]</scope>
    <source>
        <tissue>Cervix carcinoma</tissue>
    </source>
</reference>
<reference key="10">
    <citation type="journal article" date="2008" name="J. Proteome Res.">
        <title>Combining protein-based IMAC, peptide-based IMAC, and MudPIT for efficient phosphoproteomic analysis.</title>
        <authorList>
            <person name="Cantin G.T."/>
            <person name="Yi W."/>
            <person name="Lu B."/>
            <person name="Park S.K."/>
            <person name="Xu T."/>
            <person name="Lee J.-D."/>
            <person name="Yates J.R. III"/>
        </authorList>
    </citation>
    <scope>IDENTIFICATION BY MASS SPECTROMETRY [LARGE SCALE ANALYSIS]</scope>
    <source>
        <tissue>Cervix carcinoma</tissue>
    </source>
</reference>
<reference key="11">
    <citation type="journal article" date="2008" name="Mol. Cell">
        <title>Kinase-selective enrichment enables quantitative phosphoproteomics of the kinome across the cell cycle.</title>
        <authorList>
            <person name="Daub H."/>
            <person name="Olsen J.V."/>
            <person name="Bairlein M."/>
            <person name="Gnad F."/>
            <person name="Oppermann F.S."/>
            <person name="Korner R."/>
            <person name="Greff Z."/>
            <person name="Keri G."/>
            <person name="Stemmann O."/>
            <person name="Mann M."/>
        </authorList>
    </citation>
    <scope>IDENTIFICATION BY MASS SPECTROMETRY [LARGE SCALE ANALYSIS]</scope>
    <source>
        <tissue>Cervix carcinoma</tissue>
    </source>
</reference>
<reference key="12">
    <citation type="journal article" date="2008" name="Proc. Natl. Acad. Sci. U.S.A.">
        <title>A quantitative atlas of mitotic phosphorylation.</title>
        <authorList>
            <person name="Dephoure N."/>
            <person name="Zhou C."/>
            <person name="Villen J."/>
            <person name="Beausoleil S.A."/>
            <person name="Bakalarski C.E."/>
            <person name="Elledge S.J."/>
            <person name="Gygi S.P."/>
        </authorList>
    </citation>
    <scope>PHOSPHORYLATION [LARGE SCALE ANALYSIS] AT SER-515</scope>
    <scope>IDENTIFICATION BY MASS SPECTROMETRY [LARGE SCALE ANALYSIS]</scope>
    <source>
        <tissue>Cervix carcinoma</tissue>
    </source>
</reference>
<reference key="13">
    <citation type="journal article" date="2009" name="Anal. Chem.">
        <title>Lys-N and trypsin cover complementary parts of the phosphoproteome in a refined SCX-based approach.</title>
        <authorList>
            <person name="Gauci S."/>
            <person name="Helbig A.O."/>
            <person name="Slijper M."/>
            <person name="Krijgsveld J."/>
            <person name="Heck A.J."/>
            <person name="Mohammed S."/>
        </authorList>
    </citation>
    <scope>IDENTIFICATION BY MASS SPECTROMETRY [LARGE SCALE ANALYSIS]</scope>
</reference>
<reference key="14">
    <citation type="journal article" date="2009" name="Mol. Cell. Proteomics">
        <title>Large-scale proteomics analysis of the human kinome.</title>
        <authorList>
            <person name="Oppermann F.S."/>
            <person name="Gnad F."/>
            <person name="Olsen J.V."/>
            <person name="Hornberger R."/>
            <person name="Greff Z."/>
            <person name="Keri G."/>
            <person name="Mann M."/>
            <person name="Daub H."/>
        </authorList>
    </citation>
    <scope>IDENTIFICATION BY MASS SPECTROMETRY [LARGE SCALE ANALYSIS]</scope>
</reference>
<reference key="15">
    <citation type="journal article" date="2009" name="Sci. Signal.">
        <title>Quantitative phosphoproteomic analysis of T cell receptor signaling reveals system-wide modulation of protein-protein interactions.</title>
        <authorList>
            <person name="Mayya V."/>
            <person name="Lundgren D.H."/>
            <person name="Hwang S.-I."/>
            <person name="Rezaul K."/>
            <person name="Wu L."/>
            <person name="Eng J.K."/>
            <person name="Rodionov V."/>
            <person name="Han D.K."/>
        </authorList>
    </citation>
    <scope>PHOSPHORYLATION [LARGE SCALE ANALYSIS] AT SER-515</scope>
    <scope>IDENTIFICATION BY MASS SPECTROMETRY [LARGE SCALE ANALYSIS]</scope>
    <source>
        <tissue>Leukemic T-cell</tissue>
    </source>
</reference>
<reference key="16">
    <citation type="journal article" date="2010" name="Sci. Signal.">
        <title>Quantitative phosphoproteomics reveals widespread full phosphorylation site occupancy during mitosis.</title>
        <authorList>
            <person name="Olsen J.V."/>
            <person name="Vermeulen M."/>
            <person name="Santamaria A."/>
            <person name="Kumar C."/>
            <person name="Miller M.L."/>
            <person name="Jensen L.J."/>
            <person name="Gnad F."/>
            <person name="Cox J."/>
            <person name="Jensen T.S."/>
            <person name="Nigg E.A."/>
            <person name="Brunak S."/>
            <person name="Mann M."/>
        </authorList>
    </citation>
    <scope>PHOSPHORYLATION [LARGE SCALE ANALYSIS] AT SER-515</scope>
    <scope>IDENTIFICATION BY MASS SPECTROMETRY [LARGE SCALE ANALYSIS]</scope>
    <source>
        <tissue>Cervix carcinoma</tissue>
    </source>
</reference>
<reference key="17">
    <citation type="journal article" date="2011" name="BMC Syst. Biol.">
        <title>Initial characterization of the human central proteome.</title>
        <authorList>
            <person name="Burkard T.R."/>
            <person name="Planyavsky M."/>
            <person name="Kaupe I."/>
            <person name="Breitwieser F.P."/>
            <person name="Buerckstuemmer T."/>
            <person name="Bennett K.L."/>
            <person name="Superti-Furga G."/>
            <person name="Colinge J."/>
        </authorList>
    </citation>
    <scope>IDENTIFICATION BY MASS SPECTROMETRY [LARGE SCALE ANALYSIS]</scope>
</reference>
<reference key="18">
    <citation type="journal article" date="2011" name="Sci. Signal.">
        <title>System-wide temporal characterization of the proteome and phosphoproteome of human embryonic stem cell differentiation.</title>
        <authorList>
            <person name="Rigbolt K.T."/>
            <person name="Prokhorova T.A."/>
            <person name="Akimov V."/>
            <person name="Henningsen J."/>
            <person name="Johansen P.T."/>
            <person name="Kratchmarova I."/>
            <person name="Kassem M."/>
            <person name="Mann M."/>
            <person name="Olsen J.V."/>
            <person name="Blagoev B."/>
        </authorList>
    </citation>
    <scope>PHOSPHORYLATION [LARGE SCALE ANALYSIS] AT SER-515</scope>
    <scope>IDENTIFICATION BY MASS SPECTROMETRY [LARGE SCALE ANALYSIS]</scope>
</reference>
<reference key="19">
    <citation type="journal article" date="2013" name="J. Proteome Res.">
        <title>Toward a comprehensive characterization of a human cancer cell phosphoproteome.</title>
        <authorList>
            <person name="Zhou H."/>
            <person name="Di Palma S."/>
            <person name="Preisinger C."/>
            <person name="Peng M."/>
            <person name="Polat A.N."/>
            <person name="Heck A.J."/>
            <person name="Mohammed S."/>
        </authorList>
    </citation>
    <scope>PHOSPHORYLATION [LARGE SCALE ANALYSIS] AT SER-72 AND SER-515</scope>
    <scope>IDENTIFICATION BY MASS SPECTROMETRY [LARGE SCALE ANALYSIS]</scope>
    <source>
        <tissue>Cervix carcinoma</tissue>
        <tissue>Erythroleukemia</tissue>
    </source>
</reference>
<reference key="20">
    <citation type="journal article" date="2014" name="J. Proteomics">
        <title>An enzyme assisted RP-RPLC approach for in-depth analysis of human liver phosphoproteome.</title>
        <authorList>
            <person name="Bian Y."/>
            <person name="Song C."/>
            <person name="Cheng K."/>
            <person name="Dong M."/>
            <person name="Wang F."/>
            <person name="Huang J."/>
            <person name="Sun D."/>
            <person name="Wang L."/>
            <person name="Ye M."/>
            <person name="Zou H."/>
        </authorList>
    </citation>
    <scope>PHOSPHORYLATION [LARGE SCALE ANALYSIS] AT SER-515</scope>
    <scope>IDENTIFICATION BY MASS SPECTROMETRY [LARGE SCALE ANALYSIS]</scope>
    <source>
        <tissue>Liver</tissue>
    </source>
</reference>
<dbReference type="EMBL" id="AF516206">
    <property type="protein sequence ID" value="AAO42465.1"/>
    <property type="molecule type" value="mRNA"/>
</dbReference>
<dbReference type="EMBL" id="AL832636">
    <property type="protein sequence ID" value="CAD89951.1"/>
    <property type="molecule type" value="mRNA"/>
</dbReference>
<dbReference type="EMBL" id="AL832637">
    <property type="protein sequence ID" value="CAD89952.1"/>
    <property type="molecule type" value="mRNA"/>
</dbReference>
<dbReference type="EMBL" id="AL832338">
    <property type="protein sequence ID" value="CAD91138.1"/>
    <property type="molecule type" value="mRNA"/>
</dbReference>
<dbReference type="EMBL" id="AL049795">
    <property type="status" value="NOT_ANNOTATED_CDS"/>
    <property type="molecule type" value="Genomic_DNA"/>
</dbReference>
<dbReference type="EMBL" id="CH471059">
    <property type="protein sequence ID" value="EAX07565.1"/>
    <property type="molecule type" value="Genomic_DNA"/>
</dbReference>
<dbReference type="EMBL" id="CH471059">
    <property type="protein sequence ID" value="EAX07566.1"/>
    <property type="molecule type" value="Genomic_DNA"/>
</dbReference>
<dbReference type="EMBL" id="BC029686">
    <property type="protein sequence ID" value="AAH29686.1"/>
    <property type="molecule type" value="mRNA"/>
</dbReference>
<dbReference type="EMBL" id="BC046565">
    <property type="protein sequence ID" value="AAH46565.1"/>
    <property type="status" value="ALT_INIT"/>
    <property type="molecule type" value="mRNA"/>
</dbReference>
<dbReference type="EMBL" id="BC080578">
    <property type="protein sequence ID" value="AAH80578.1"/>
    <property type="molecule type" value="mRNA"/>
</dbReference>
<dbReference type="EMBL" id="BC103823">
    <property type="protein sequence ID" value="AAI03824.1"/>
    <property type="molecule type" value="mRNA"/>
</dbReference>
<dbReference type="EMBL" id="BC103824">
    <property type="protein sequence ID" value="AAI03825.1"/>
    <property type="molecule type" value="mRNA"/>
</dbReference>
<dbReference type="EMBL" id="L15344">
    <property type="status" value="NOT_ANNOTATED_CDS"/>
    <property type="molecule type" value="mRNA"/>
</dbReference>
<dbReference type="CCDS" id="CCDS353.1"/>
<dbReference type="PIR" id="A48203">
    <property type="entry name" value="A48203"/>
</dbReference>
<dbReference type="RefSeq" id="NP_001363786.1">
    <property type="nucleotide sequence ID" value="NM_001376857.1"/>
</dbReference>
<dbReference type="RefSeq" id="NP_787048.1">
    <property type="nucleotide sequence ID" value="NM_175852.4"/>
</dbReference>
<dbReference type="RefSeq" id="XP_016856051.1">
    <property type="nucleotide sequence ID" value="XM_017000562.1"/>
</dbReference>
<dbReference type="SMR" id="P40222"/>
<dbReference type="BioGRID" id="128297">
    <property type="interactions" value="246"/>
</dbReference>
<dbReference type="CORUM" id="P40222"/>
<dbReference type="DIP" id="DIP-27612N"/>
<dbReference type="FunCoup" id="P40222">
    <property type="interactions" value="3543"/>
</dbReference>
<dbReference type="IntAct" id="P40222">
    <property type="interactions" value="166"/>
</dbReference>
<dbReference type="MINT" id="P40222"/>
<dbReference type="STRING" id="9606.ENSP00000362711"/>
<dbReference type="GlyGen" id="P40222">
    <property type="glycosylation" value="8 sites, 1 O-linked glycan (7 sites)"/>
</dbReference>
<dbReference type="iPTMnet" id="P40222"/>
<dbReference type="MetOSite" id="P40222"/>
<dbReference type="PhosphoSitePlus" id="P40222"/>
<dbReference type="SwissPalm" id="P40222"/>
<dbReference type="BioMuta" id="TXLNA"/>
<dbReference type="DMDM" id="55584162"/>
<dbReference type="jPOST" id="P40222"/>
<dbReference type="MassIVE" id="P40222"/>
<dbReference type="PaxDb" id="9606-ENSP00000362711"/>
<dbReference type="PeptideAtlas" id="P40222"/>
<dbReference type="ProteomicsDB" id="55349"/>
<dbReference type="Pumba" id="P40222"/>
<dbReference type="Antibodypedia" id="31239">
    <property type="antibodies" value="160 antibodies from 30 providers"/>
</dbReference>
<dbReference type="DNASU" id="200081"/>
<dbReference type="Ensembl" id="ENST00000373609.1">
    <property type="protein sequence ID" value="ENSP00000362711.1"/>
    <property type="gene ID" value="ENSG00000084652.16"/>
</dbReference>
<dbReference type="Ensembl" id="ENST00000373610.8">
    <property type="protein sequence ID" value="ENSP00000362712.3"/>
    <property type="gene ID" value="ENSG00000084652.16"/>
</dbReference>
<dbReference type="GeneID" id="200081"/>
<dbReference type="KEGG" id="hsa:200081"/>
<dbReference type="MANE-Select" id="ENST00000373610.8">
    <property type="protein sequence ID" value="ENSP00000362712.3"/>
    <property type="RefSeq nucleotide sequence ID" value="NM_175852.4"/>
    <property type="RefSeq protein sequence ID" value="NP_787048.1"/>
</dbReference>
<dbReference type="UCSC" id="uc001bui.4">
    <property type="organism name" value="human"/>
</dbReference>
<dbReference type="AGR" id="HGNC:30685"/>
<dbReference type="CTD" id="200081"/>
<dbReference type="DisGeNET" id="200081"/>
<dbReference type="GeneCards" id="TXLNA"/>
<dbReference type="HGNC" id="HGNC:30685">
    <property type="gene designation" value="TXLNA"/>
</dbReference>
<dbReference type="HPA" id="ENSG00000084652">
    <property type="expression patterns" value="Low tissue specificity"/>
</dbReference>
<dbReference type="MIM" id="608676">
    <property type="type" value="gene"/>
</dbReference>
<dbReference type="neXtProt" id="NX_P40222"/>
<dbReference type="OpenTargets" id="ENSG00000084652"/>
<dbReference type="PharmGKB" id="PA142670668"/>
<dbReference type="VEuPathDB" id="HostDB:ENSG00000084652"/>
<dbReference type="eggNOG" id="KOG1850">
    <property type="taxonomic scope" value="Eukaryota"/>
</dbReference>
<dbReference type="GeneTree" id="ENSGT00940000158303"/>
<dbReference type="HOGENOM" id="CLU_025501_3_0_1"/>
<dbReference type="InParanoid" id="P40222"/>
<dbReference type="OMA" id="VTEAPCC"/>
<dbReference type="OrthoDB" id="425555at2759"/>
<dbReference type="PAN-GO" id="P40222">
    <property type="GO annotations" value="0 GO annotations based on evolutionary models"/>
</dbReference>
<dbReference type="PhylomeDB" id="P40222"/>
<dbReference type="TreeFam" id="TF318595"/>
<dbReference type="PathwayCommons" id="P40222"/>
<dbReference type="Reactome" id="R-HSA-449836">
    <property type="pathway name" value="Other interleukin signaling"/>
</dbReference>
<dbReference type="SignaLink" id="P40222"/>
<dbReference type="BioGRID-ORCS" id="200081">
    <property type="hits" value="25 hits in 1158 CRISPR screens"/>
</dbReference>
<dbReference type="CD-CODE" id="91857CE7">
    <property type="entry name" value="Nucleolus"/>
</dbReference>
<dbReference type="ChiTaRS" id="TXLNA">
    <property type="organism name" value="human"/>
</dbReference>
<dbReference type="GeneWiki" id="TXLNA"/>
<dbReference type="GenomeRNAi" id="200081"/>
<dbReference type="Pharos" id="P40222">
    <property type="development level" value="Tbio"/>
</dbReference>
<dbReference type="PRO" id="PR:P40222"/>
<dbReference type="Proteomes" id="UP000005640">
    <property type="component" value="Chromosome 1"/>
</dbReference>
<dbReference type="RNAct" id="P40222">
    <property type="molecule type" value="protein"/>
</dbReference>
<dbReference type="Bgee" id="ENSG00000084652">
    <property type="expression patterns" value="Expressed in stromal cell of endometrium and 182 other cell types or tissues"/>
</dbReference>
<dbReference type="GO" id="GO:0005737">
    <property type="term" value="C:cytoplasm"/>
    <property type="evidence" value="ECO:0000314"/>
    <property type="project" value="LIFEdb"/>
</dbReference>
<dbReference type="GO" id="GO:0005829">
    <property type="term" value="C:cytosol"/>
    <property type="evidence" value="ECO:0000304"/>
    <property type="project" value="Reactome"/>
</dbReference>
<dbReference type="GO" id="GO:0005576">
    <property type="term" value="C:extracellular region"/>
    <property type="evidence" value="ECO:0000303"/>
    <property type="project" value="UniProtKB"/>
</dbReference>
<dbReference type="GO" id="GO:0016020">
    <property type="term" value="C:membrane"/>
    <property type="evidence" value="ECO:0007005"/>
    <property type="project" value="UniProtKB"/>
</dbReference>
<dbReference type="GO" id="GO:0019905">
    <property type="term" value="F:syntaxin binding"/>
    <property type="evidence" value="ECO:0007669"/>
    <property type="project" value="InterPro"/>
</dbReference>
<dbReference type="GO" id="GO:0042113">
    <property type="term" value="P:B cell activation"/>
    <property type="evidence" value="ECO:0007669"/>
    <property type="project" value="Ensembl"/>
</dbReference>
<dbReference type="GO" id="GO:0006887">
    <property type="term" value="P:exocytosis"/>
    <property type="evidence" value="ECO:0007669"/>
    <property type="project" value="UniProtKB-KW"/>
</dbReference>
<dbReference type="InterPro" id="IPR026183">
    <property type="entry name" value="Taxilin_fam"/>
</dbReference>
<dbReference type="PANTHER" id="PTHR16127:SF12">
    <property type="entry name" value="ALPHA-TAXILIN"/>
    <property type="match status" value="1"/>
</dbReference>
<dbReference type="PANTHER" id="PTHR16127">
    <property type="entry name" value="TAXILIN"/>
    <property type="match status" value="1"/>
</dbReference>
<dbReference type="Pfam" id="PF09728">
    <property type="entry name" value="Taxilin"/>
    <property type="match status" value="1"/>
</dbReference>
<comment type="function">
    <text>May be involved in intracellular vesicle traffic and potentially in calcium-dependent exocytosis in neuroendocrine cells.</text>
</comment>
<comment type="subunit">
    <text evidence="3 4">Binds to the C-terminal coiled coil region of syntaxin family members STX1A, STX3A and STX4A, but not when these proteins are complexed with SNAP25, VAMP2 or STXBP1, suggesting that it interacts with syntaxins that do not form the SNARE complex.</text>
</comment>
<comment type="interaction">
    <interactant intactId="EBI-359793">
        <id>P40222</id>
    </interactant>
    <interactant intactId="EBI-4400025">
        <id>Q9Y2T1</id>
        <label>AXIN2</label>
    </interactant>
    <organismsDiffer>false</organismsDiffer>
    <experiments>3</experiments>
</comment>
<comment type="interaction">
    <interactant intactId="EBI-359793">
        <id>P40222</id>
    </interactant>
    <interactant intactId="EBI-2653038">
        <id>Q9NQY0</id>
        <label>BIN3</label>
    </interactant>
    <organismsDiffer>false</organismsDiffer>
    <experiments>3</experiments>
</comment>
<comment type="interaction">
    <interactant intactId="EBI-359793">
        <id>P40222</id>
    </interactant>
    <interactant intactId="EBI-5666615">
        <id>Q5PSV4</id>
        <label>BRMS1L</label>
    </interactant>
    <organismsDiffer>false</organismsDiffer>
    <experiments>3</experiments>
</comment>
<comment type="interaction">
    <interactant intactId="EBI-359793">
        <id>P40222</id>
    </interactant>
    <interactant intactId="EBI-1054687">
        <id>P20290</id>
        <label>BTF3</label>
    </interactant>
    <organismsDiffer>false</organismsDiffer>
    <experiments>4</experiments>
</comment>
<comment type="interaction">
    <interactant intactId="EBI-359793">
        <id>P40222</id>
    </interactant>
    <interactant intactId="EBI-6137496">
        <id>Q96K17</id>
        <label>BTF3L4</label>
    </interactant>
    <organismsDiffer>false</organismsDiffer>
    <experiments>6</experiments>
</comment>
<comment type="interaction">
    <interactant intactId="EBI-359793">
        <id>P40222</id>
    </interactant>
    <interactant intactId="EBI-741724">
        <id>Q8NA61</id>
        <label>CBY2</label>
    </interactant>
    <organismsDiffer>false</organismsDiffer>
    <experiments>3</experiments>
</comment>
<comment type="interaction">
    <interactant intactId="EBI-359793">
        <id>P40222</id>
    </interactant>
    <interactant intactId="EBI-11524851">
        <id>Q8NA61-2</id>
        <label>CBY2</label>
    </interactant>
    <organismsDiffer>false</organismsDiffer>
    <experiments>3</experiments>
</comment>
<comment type="interaction">
    <interactant intactId="EBI-359793">
        <id>P40222</id>
    </interactant>
    <interactant intactId="EBI-12095166">
        <id>Q8NEF3-2</id>
        <label>CCDC112</label>
    </interactant>
    <organismsDiffer>false</organismsDiffer>
    <experiments>3</experiments>
</comment>
<comment type="interaction">
    <interactant intactId="EBI-359793">
        <id>P40222</id>
    </interactant>
    <interactant intactId="EBI-10171416">
        <id>Q96JN2-2</id>
        <label>CCDC136</label>
    </interactant>
    <organismsDiffer>false</organismsDiffer>
    <experiments>5</experiments>
</comment>
<comment type="interaction">
    <interactant intactId="EBI-359793">
        <id>P40222</id>
    </interactant>
    <interactant intactId="EBI-10749669">
        <id>Q8IYE0</id>
        <label>CCDC146</label>
    </interactant>
    <organismsDiffer>false</organismsDiffer>
    <experiments>3</experiments>
</comment>
<comment type="interaction">
    <interactant intactId="EBI-359793">
        <id>P40222</id>
    </interactant>
    <interactant intactId="EBI-10181422">
        <id>A0A1B0GWI1</id>
        <label>CCDC196</label>
    </interactant>
    <organismsDiffer>false</organismsDiffer>
    <experiments>5</experiments>
</comment>
<comment type="interaction">
    <interactant intactId="EBI-359793">
        <id>P40222</id>
    </interactant>
    <interactant intactId="EBI-10961624">
        <id>Q2TAC2-2</id>
        <label>CCDC57</label>
    </interactant>
    <organismsDiffer>false</organismsDiffer>
    <experiments>3</experiments>
</comment>
<comment type="interaction">
    <interactant intactId="EBI-359793">
        <id>P40222</id>
    </interactant>
    <interactant intactId="EBI-10175300">
        <id>Q8TD31-3</id>
        <label>CCHCR1</label>
    </interactant>
    <organismsDiffer>false</organismsDiffer>
    <experiments>6</experiments>
</comment>
<comment type="interaction">
    <interactant intactId="EBI-359793">
        <id>P40222</id>
    </interactant>
    <interactant intactId="EBI-374880">
        <id>Q99459</id>
        <label>CDC5L</label>
    </interactant>
    <organismsDiffer>false</organismsDiffer>
    <experiments>3</experiments>
</comment>
<comment type="interaction">
    <interactant intactId="EBI-359793">
        <id>P40222</id>
    </interactant>
    <interactant intactId="EBI-1181367">
        <id>Q01850</id>
        <label>CDR2</label>
    </interactant>
    <organismsDiffer>false</organismsDiffer>
    <experiments>7</experiments>
</comment>
<comment type="interaction">
    <interactant intactId="EBI-359793">
        <id>P40222</id>
    </interactant>
    <interactant intactId="EBI-744115">
        <id>Q9C0F1</id>
        <label>CEP44</label>
    </interactant>
    <organismsDiffer>false</organismsDiffer>
    <experiments>6</experiments>
</comment>
<comment type="interaction">
    <interactant intactId="EBI-359793">
        <id>P40222</id>
    </interactant>
    <interactant intactId="EBI-11752486">
        <id>Q86XR8-3</id>
        <label>CEP57</label>
    </interactant>
    <organismsDiffer>false</organismsDiffer>
    <experiments>3</experiments>
</comment>
<comment type="interaction">
    <interactant intactId="EBI-359793">
        <id>P40222</id>
    </interactant>
    <interactant intactId="EBI-1104570">
        <id>Q8IYX8</id>
        <label>CEP57L1</label>
    </interactant>
    <organismsDiffer>false</organismsDiffer>
    <experiments>3</experiments>
</comment>
<comment type="interaction">
    <interactant intactId="EBI-359793">
        <id>P40222</id>
    </interactant>
    <interactant intactId="EBI-10181988">
        <id>Q8IYX8-2</id>
        <label>CEP57L1</label>
    </interactant>
    <organismsDiffer>false</organismsDiffer>
    <experiments>3</experiments>
</comment>
<comment type="interaction">
    <interactant intactId="EBI-359793">
        <id>P40222</id>
    </interactant>
    <interactant intactId="EBI-741977">
        <id>Q96MT8</id>
        <label>CEP63</label>
    </interactant>
    <organismsDiffer>false</organismsDiffer>
    <experiments>4</experiments>
</comment>
<comment type="interaction">
    <interactant intactId="EBI-359793">
        <id>P40222</id>
    </interactant>
    <interactant intactId="EBI-742422">
        <id>Q96M91</id>
        <label>CFAP53</label>
    </interactant>
    <organismsDiffer>false</organismsDiffer>
    <experiments>3</experiments>
</comment>
<comment type="interaction">
    <interactant intactId="EBI-359793">
        <id>P40222</id>
    </interactant>
    <interactant intactId="EBI-748597">
        <id>Q05D60</id>
        <label>DEUP1</label>
    </interactant>
    <organismsDiffer>false</organismsDiffer>
    <experiments>11</experiments>
</comment>
<comment type="interaction">
    <interactant intactId="EBI-359793">
        <id>P40222</id>
    </interactant>
    <interactant intactId="EBI-399105">
        <id>Q9NPF5</id>
        <label>DMAP1</label>
    </interactant>
    <organismsDiffer>false</organismsDiffer>
    <experiments>3</experiments>
</comment>
<comment type="interaction">
    <interactant intactId="EBI-359793">
        <id>P40222</id>
    </interactant>
    <interactant intactId="EBI-740402">
        <id>O60941</id>
        <label>DTNB</label>
    </interactant>
    <organismsDiffer>false</organismsDiffer>
    <experiments>5</experiments>
</comment>
<comment type="interaction">
    <interactant intactId="EBI-359793">
        <id>P40222</id>
    </interactant>
    <interactant intactId="EBI-11984733">
        <id>O60941-5</id>
        <label>DTNB</label>
    </interactant>
    <organismsDiffer>false</organismsDiffer>
    <experiments>3</experiments>
</comment>
<comment type="interaction">
    <interactant intactId="EBI-359793">
        <id>P40222</id>
    </interactant>
    <interactant intactId="EBI-301024">
        <id>Q9NRA8</id>
        <label>EIF4ENIF1</label>
    </interactant>
    <organismsDiffer>false</organismsDiffer>
    <experiments>3</experiments>
</comment>
<comment type="interaction">
    <interactant intactId="EBI-359793">
        <id>P40222</id>
    </interactant>
    <interactant intactId="EBI-12135243">
        <id>O95208-2</id>
        <label>EPN2</label>
    </interactant>
    <organismsDiffer>false</organismsDiffer>
    <experiments>3</experiments>
</comment>
<comment type="interaction">
    <interactant intactId="EBI-359793">
        <id>P40222</id>
    </interactant>
    <interactant intactId="EBI-11993062">
        <id>Q8TBF8</id>
        <label>FAM81A</label>
    </interactant>
    <organismsDiffer>false</organismsDiffer>
    <experiments>3</experiments>
</comment>
<comment type="interaction">
    <interactant intactId="EBI-359793">
        <id>P40222</id>
    </interactant>
    <interactant intactId="EBI-8468186">
        <id>Q8IZU1</id>
        <label>FAM9A</label>
    </interactant>
    <organismsDiffer>false</organismsDiffer>
    <experiments>3</experiments>
</comment>
<comment type="interaction">
    <interactant intactId="EBI-359793">
        <id>P40222</id>
    </interactant>
    <interactant intactId="EBI-1052570">
        <id>O95995</id>
        <label>GAS8</label>
    </interactant>
    <organismsDiffer>false</organismsDiffer>
    <experiments>3</experiments>
</comment>
<comment type="interaction">
    <interactant intactId="EBI-359793">
        <id>P40222</id>
    </interactant>
    <interactant intactId="EBI-618309">
        <id>Q08379</id>
        <label>GOLGA2</label>
    </interactant>
    <organismsDiffer>false</organismsDiffer>
    <experiments>3</experiments>
</comment>
<comment type="interaction">
    <interactant intactId="EBI-359793">
        <id>P40222</id>
    </interactant>
    <interactant intactId="EBI-11163335">
        <id>Q9NYA3</id>
        <label>GOLGA6A</label>
    </interactant>
    <organismsDiffer>false</organismsDiffer>
    <experiments>3</experiments>
</comment>
<comment type="interaction">
    <interactant intactId="EBI-359793">
        <id>P40222</id>
    </interactant>
    <interactant intactId="EBI-739467">
        <id>Q9H8Y8</id>
        <label>GORASP2</label>
    </interactant>
    <organismsDiffer>false</organismsDiffer>
    <experiments>7</experiments>
</comment>
<comment type="interaction">
    <interactant intactId="EBI-359793">
        <id>P40222</id>
    </interactant>
    <interactant intactId="EBI-2558217">
        <id>Q68CZ6</id>
        <label>HAUS3</label>
    </interactant>
    <organismsDiffer>false</organismsDiffer>
    <experiments>9</experiments>
</comment>
<comment type="interaction">
    <interactant intactId="EBI-359793">
        <id>P40222</id>
    </interactant>
    <interactant intactId="EBI-1048743">
        <id>Q9NX55</id>
        <label>HYPK</label>
    </interactant>
    <organismsDiffer>false</organismsDiffer>
    <experiments>6</experiments>
</comment>
<comment type="interaction">
    <interactant intactId="EBI-359793">
        <id>P40222</id>
    </interactant>
    <interactant intactId="EBI-2556193">
        <id>Q63ZY3</id>
        <label>KANK2</label>
    </interactant>
    <organismsDiffer>false</organismsDiffer>
    <experiments>6</experiments>
</comment>
<comment type="interaction">
    <interactant intactId="EBI-359793">
        <id>P40222</id>
    </interactant>
    <interactant intactId="EBI-3437878">
        <id>Q86T90</id>
        <label>KIAA1328</label>
    </interactant>
    <organismsDiffer>false</organismsDiffer>
    <experiments>3</experiments>
</comment>
<comment type="interaction">
    <interactant intactId="EBI-359793">
        <id>P40222</id>
    </interactant>
    <interactant intactId="EBI-10171552">
        <id>A1A4E9</id>
        <label>KRT13</label>
    </interactant>
    <organismsDiffer>false</organismsDiffer>
    <experiments>3</experiments>
</comment>
<comment type="interaction">
    <interactant intactId="EBI-359793">
        <id>P40222</id>
    </interactant>
    <interactant intactId="EBI-739566">
        <id>P19012</id>
        <label>KRT15</label>
    </interactant>
    <organismsDiffer>false</organismsDiffer>
    <experiments>6</experiments>
</comment>
<comment type="interaction">
    <interactant intactId="EBI-359793">
        <id>P40222</id>
    </interactant>
    <interactant intactId="EBI-742094">
        <id>P35900</id>
        <label>KRT20</label>
    </interactant>
    <organismsDiffer>false</organismsDiffer>
    <experiments>6</experiments>
</comment>
<comment type="interaction">
    <interactant intactId="EBI-359793">
        <id>P40222</id>
    </interactant>
    <interactant intactId="EBI-2952736">
        <id>Q2M2I5</id>
        <label>KRT24</label>
    </interactant>
    <organismsDiffer>false</organismsDiffer>
    <experiments>3</experiments>
</comment>
<comment type="interaction">
    <interactant intactId="EBI-359793">
        <id>P40222</id>
    </interactant>
    <interactant intactId="EBI-3044087">
        <id>Q7Z3Y8</id>
        <label>KRT27</label>
    </interactant>
    <organismsDiffer>false</organismsDiffer>
    <experiments>4</experiments>
</comment>
<comment type="interaction">
    <interactant intactId="EBI-359793">
        <id>P40222</id>
    </interactant>
    <interactant intactId="EBI-948001">
        <id>Q15323</id>
        <label>KRT31</label>
    </interactant>
    <organismsDiffer>false</organismsDiffer>
    <experiments>7</experiments>
</comment>
<comment type="interaction">
    <interactant intactId="EBI-359793">
        <id>P40222</id>
    </interactant>
    <interactant intactId="EBI-1047093">
        <id>O76011</id>
        <label>KRT34</label>
    </interactant>
    <organismsDiffer>false</organismsDiffer>
    <experiments>4</experiments>
</comment>
<comment type="interaction">
    <interactant intactId="EBI-359793">
        <id>P40222</id>
    </interactant>
    <interactant intactId="EBI-1058674">
        <id>Q92764</id>
        <label>KRT35</label>
    </interactant>
    <organismsDiffer>false</organismsDiffer>
    <experiments>3</experiments>
</comment>
<comment type="interaction">
    <interactant intactId="EBI-359793">
        <id>P40222</id>
    </interactant>
    <interactant intactId="EBI-11958506">
        <id>O76013-2</id>
        <label>KRT36</label>
    </interactant>
    <organismsDiffer>false</organismsDiffer>
    <experiments>3</experiments>
</comment>
<comment type="interaction">
    <interactant intactId="EBI-359793">
        <id>P40222</id>
    </interactant>
    <interactant intactId="EBI-1047263">
        <id>O76015</id>
        <label>KRT38</label>
    </interactant>
    <organismsDiffer>false</organismsDiffer>
    <experiments>7</experiments>
</comment>
<comment type="interaction">
    <interactant intactId="EBI-359793">
        <id>P40222</id>
    </interactant>
    <interactant intactId="EBI-10171697">
        <id>Q6A162</id>
        <label>KRT40</label>
    </interactant>
    <organismsDiffer>false</organismsDiffer>
    <experiments>8</experiments>
</comment>
<comment type="interaction">
    <interactant intactId="EBI-359793">
        <id>P40222</id>
    </interactant>
    <interactant intactId="EBI-2949715">
        <id>O95678</id>
        <label>KRT75</label>
    </interactant>
    <organismsDiffer>false</organismsDiffer>
    <experiments>3</experiments>
</comment>
<comment type="interaction">
    <interactant intactId="EBI-359793">
        <id>P40222</id>
    </interactant>
    <interactant intactId="EBI-6658186">
        <id>Q86VQ0</id>
        <label>LCA5</label>
    </interactant>
    <organismsDiffer>false</organismsDiffer>
    <experiments>3</experiments>
</comment>
<comment type="interaction">
    <interactant intactId="EBI-359793">
        <id>P40222</id>
    </interactant>
    <interactant intactId="EBI-1216080">
        <id>Q9Y250</id>
        <label>LZTS1</label>
    </interactant>
    <organismsDiffer>false</organismsDiffer>
    <experiments>3</experiments>
</comment>
<comment type="interaction">
    <interactant intactId="EBI-359793">
        <id>P40222</id>
    </interactant>
    <interactant intactId="EBI-10182361">
        <id>Q9NS73-5</id>
        <label>MBIP</label>
    </interactant>
    <organismsDiffer>false</organismsDiffer>
    <experiments>3</experiments>
</comment>
<comment type="interaction">
    <interactant intactId="EBI-359793">
        <id>P40222</id>
    </interactant>
    <interactant intactId="EBI-307531">
        <id>P23508</id>
        <label>MCC</label>
    </interactant>
    <organismsDiffer>false</organismsDiffer>
    <experiments>3</experiments>
</comment>
<comment type="interaction">
    <interactant intactId="EBI-359793">
        <id>P40222</id>
    </interactant>
    <interactant intactId="EBI-394607">
        <id>Q9NPJ6</id>
        <label>MED4</label>
    </interactant>
    <organismsDiffer>false</organismsDiffer>
    <experiments>9</experiments>
</comment>
<comment type="interaction">
    <interactant intactId="EBI-359793">
        <id>P40222</id>
    </interactant>
    <interactant intactId="EBI-2864512">
        <id>P50221</id>
        <label>MEOX1</label>
    </interactant>
    <organismsDiffer>false</organismsDiffer>
    <experiments>3</experiments>
</comment>
<comment type="interaction">
    <interactant intactId="EBI-359793">
        <id>P40222</id>
    </interactant>
    <interactant intactId="EBI-748397">
        <id>P50222</id>
        <label>MEOX2</label>
    </interactant>
    <organismsDiffer>false</organismsDiffer>
    <experiments>3</experiments>
</comment>
<comment type="interaction">
    <interactant intactId="EBI-359793">
        <id>P40222</id>
    </interactant>
    <interactant intactId="EBI-1104552">
        <id>Q9NYP9</id>
        <label>MIS18A</label>
    </interactant>
    <organismsDiffer>false</organismsDiffer>
    <experiments>5</experiments>
</comment>
<comment type="interaction">
    <interactant intactId="EBI-359793">
        <id>P40222</id>
    </interactant>
    <interactant intactId="EBI-712216">
        <id>Q13765</id>
        <label>NACA</label>
    </interactant>
    <organismsDiffer>false</organismsDiffer>
    <experiments>2</experiments>
</comment>
<comment type="interaction">
    <interactant intactId="EBI-359793">
        <id>P40222</id>
    </interactant>
    <interactant intactId="EBI-715849">
        <id>O14777</id>
        <label>NDC80</label>
    </interactant>
    <organismsDiffer>false</organismsDiffer>
    <experiments>7</experiments>
</comment>
<comment type="interaction">
    <interactant intactId="EBI-359793">
        <id>P40222</id>
    </interactant>
    <interactant intactId="EBI-3920396">
        <id>Q6ZUT1</id>
        <label>NKAPD1</label>
    </interactant>
    <organismsDiffer>false</organismsDiffer>
    <experiments>3</experiments>
</comment>
<comment type="interaction">
    <interactant intactId="EBI-359793">
        <id>P40222</id>
    </interactant>
    <interactant intactId="EBI-372942">
        <id>Q13287</id>
        <label>NMI</label>
    </interactant>
    <organismsDiffer>false</organismsDiffer>
    <experiments>9</experiments>
</comment>
<comment type="interaction">
    <interactant intactId="EBI-359793">
        <id>P40222</id>
    </interactant>
    <interactant intactId="EBI-2557388">
        <id>Q96MF7</id>
        <label>NSMCE2</label>
    </interactant>
    <organismsDiffer>false</organismsDiffer>
    <experiments>6</experiments>
</comment>
<comment type="interaction">
    <interactant intactId="EBI-359793">
        <id>P40222</id>
    </interactant>
    <interactant intactId="EBI-347978">
        <id>P37198</id>
        <label>NUP62</label>
    </interactant>
    <organismsDiffer>false</organismsDiffer>
    <experiments>8</experiments>
</comment>
<comment type="interaction">
    <interactant intactId="EBI-359793">
        <id>P40222</id>
    </interactant>
    <interactant intactId="EBI-3914525">
        <id>Q13516</id>
        <label>OLIG2</label>
    </interactant>
    <organismsDiffer>false</organismsDiffer>
    <experiments>3</experiments>
</comment>
<comment type="interaction">
    <interactant intactId="EBI-359793">
        <id>P40222</id>
    </interactant>
    <interactant intactId="EBI-348567">
        <id>O75928-2</id>
        <label>PIAS2</label>
    </interactant>
    <organismsDiffer>false</organismsDiffer>
    <experiments>3</experiments>
</comment>
<comment type="interaction">
    <interactant intactId="EBI-359793">
        <id>P40222</id>
    </interactant>
    <interactant intactId="EBI-745426">
        <id>Q13136</id>
        <label>PPFIA1</label>
    </interactant>
    <organismsDiffer>false</organismsDiffer>
    <experiments>5</experiments>
</comment>
<comment type="interaction">
    <interactant intactId="EBI-359793">
        <id>P40222</id>
    </interactant>
    <interactant intactId="EBI-1105153">
        <id>Q96KQ4</id>
        <label>PPP1R13B</label>
    </interactant>
    <organismsDiffer>false</organismsDiffer>
    <experiments>3</experiments>
</comment>
<comment type="interaction">
    <interactant intactId="EBI-359793">
        <id>P40222</id>
    </interactant>
    <interactant intactId="EBI-744322">
        <id>O43395</id>
        <label>PRPF3</label>
    </interactant>
    <organismsDiffer>false</organismsDiffer>
    <experiments>3</experiments>
</comment>
<comment type="interaction">
    <interactant intactId="EBI-359793">
        <id>P40222</id>
    </interactant>
    <interactant intactId="EBI-10976415">
        <id>Q8NHQ8-2</id>
        <label>RASSF8</label>
    </interactant>
    <organismsDiffer>false</organismsDiffer>
    <experiments>3</experiments>
</comment>
<comment type="interaction">
    <interactant intactId="EBI-359793">
        <id>P40222</id>
    </interactant>
    <interactant intactId="EBI-743428">
        <id>Q9P2K3</id>
        <label>RCOR3</label>
    </interactant>
    <organismsDiffer>false</organismsDiffer>
    <experiments>3</experiments>
</comment>
<comment type="interaction">
    <interactant intactId="EBI-359793">
        <id>P40222</id>
    </interactant>
    <interactant intactId="EBI-726876">
        <id>Q6NUQ1</id>
        <label>RINT1</label>
    </interactant>
    <organismsDiffer>false</organismsDiffer>
    <experiments>6</experiments>
</comment>
<comment type="interaction">
    <interactant intactId="EBI-359793">
        <id>P40222</id>
    </interactant>
    <interactant intactId="EBI-1773646">
        <id>Q9BRV8</id>
        <label>SIKE1</label>
    </interactant>
    <organismsDiffer>false</organismsDiffer>
    <experiments>3</experiments>
</comment>
<comment type="interaction">
    <interactant intactId="EBI-359793">
        <id>P40222</id>
    </interactant>
    <interactant intactId="EBI-455078">
        <id>Q969G3</id>
        <label>SMARCE1</label>
    </interactant>
    <organismsDiffer>false</organismsDiffer>
    <experiments>3</experiments>
</comment>
<comment type="interaction">
    <interactant intactId="EBI-359793">
        <id>P40222</id>
    </interactant>
    <interactant intactId="EBI-747719">
        <id>Q96H20</id>
        <label>SNF8</label>
    </interactant>
    <organismsDiffer>false</organismsDiffer>
    <experiments>3</experiments>
</comment>
<comment type="interaction">
    <interactant intactId="EBI-359793">
        <id>P40222</id>
    </interactant>
    <interactant intactId="EBI-741237">
        <id>O60504</id>
        <label>SORBS3</label>
    </interactant>
    <organismsDiffer>false</organismsDiffer>
    <experiments>3</experiments>
</comment>
<comment type="interaction">
    <interactant intactId="EBI-359793">
        <id>P40222</id>
    </interactant>
    <interactant intactId="EBI-1044237">
        <id>Q8WXA9</id>
        <label>SREK1</label>
    </interactant>
    <organismsDiffer>false</organismsDiffer>
    <experiments>3</experiments>
</comment>
<comment type="interaction">
    <interactant intactId="EBI-359793">
        <id>P40222</id>
    </interactant>
    <interactant intactId="EBI-714194">
        <id>Q93045</id>
        <label>STMN2</label>
    </interactant>
    <organismsDiffer>false</organismsDiffer>
    <experiments>4</experiments>
</comment>
<comment type="interaction">
    <interactant intactId="EBI-359793">
        <id>P40222</id>
    </interactant>
    <interactant intactId="EBI-712466">
        <id>Q16623</id>
        <label>STX1A</label>
    </interactant>
    <organismsDiffer>false</organismsDiffer>
    <experiments>4</experiments>
</comment>
<comment type="interaction">
    <interactant intactId="EBI-359793">
        <id>P40222</id>
    </interactant>
    <interactant intactId="EBI-9071709">
        <id>P61266</id>
        <label>STX1B</label>
    </interactant>
    <organismsDiffer>false</organismsDiffer>
    <experiments>3</experiments>
</comment>
<comment type="interaction">
    <interactant intactId="EBI-359793">
        <id>P40222</id>
    </interactant>
    <interactant intactId="EBI-1644036">
        <id>Q86TI0</id>
        <label>TBC1D1</label>
    </interactant>
    <organismsDiffer>false</organismsDiffer>
    <experiments>3</experiments>
</comment>
<comment type="interaction">
    <interactant intactId="EBI-359793">
        <id>P40222</id>
    </interactant>
    <interactant intactId="EBI-356402">
        <id>Q9UHD2</id>
        <label>TBK1</label>
    </interactant>
    <organismsDiffer>false</organismsDiffer>
    <experiments>8</experiments>
</comment>
<comment type="interaction">
    <interactant intactId="EBI-359793">
        <id>P40222</id>
    </interactant>
    <interactant intactId="EBI-749995">
        <id>P56279</id>
        <label>TCL1A</label>
    </interactant>
    <organismsDiffer>false</organismsDiffer>
    <experiments>8</experiments>
</comment>
<comment type="interaction">
    <interactant intactId="EBI-359793">
        <id>P40222</id>
    </interactant>
    <interactant intactId="EBI-1105213">
        <id>Q9UBB9</id>
        <label>TFIP11</label>
    </interactant>
    <organismsDiffer>false</organismsDiffer>
    <experiments>8</experiments>
</comment>
<comment type="interaction">
    <interactant intactId="EBI-359793">
        <id>P40222</id>
    </interactant>
    <interactant intactId="EBI-357849">
        <id>Q15025</id>
        <label>TNIP1</label>
    </interactant>
    <organismsDiffer>false</organismsDiffer>
    <experiments>6</experiments>
</comment>
<comment type="interaction">
    <interactant intactId="EBI-359793">
        <id>P40222</id>
    </interactant>
    <interactant intactId="EBI-11952721">
        <id>Q05BL1</id>
        <label>TP53BP2</label>
    </interactant>
    <organismsDiffer>false</organismsDiffer>
    <experiments>3</experiments>
</comment>
<comment type="interaction">
    <interactant intactId="EBI-359793">
        <id>P40222</id>
    </interactant>
    <interactant intactId="EBI-10175039">
        <id>Q13625-3</id>
        <label>TP53BP2</label>
    </interactant>
    <organismsDiffer>false</organismsDiffer>
    <experiments>3</experiments>
</comment>
<comment type="interaction">
    <interactant intactId="EBI-359793">
        <id>P40222</id>
    </interactant>
    <interactant intactId="EBI-2555404">
        <id>Q6PID6</id>
        <label>TTC33</label>
    </interactant>
    <organismsDiffer>false</organismsDiffer>
    <experiments>6</experiments>
</comment>
<comment type="interaction">
    <interactant intactId="EBI-359793">
        <id>P40222</id>
    </interactant>
    <interactant intactId="EBI-6116822">
        <id>Q8N3L3</id>
        <label>TXLNB</label>
    </interactant>
    <organismsDiffer>false</organismsDiffer>
    <experiments>13</experiments>
</comment>
<comment type="interaction">
    <interactant intactId="EBI-359793">
        <id>P40222</id>
    </interactant>
    <interactant intactId="EBI-739895">
        <id>Q8N6Y0</id>
        <label>USHBP1</label>
    </interactant>
    <organismsDiffer>false</organismsDiffer>
    <experiments>6</experiments>
</comment>
<comment type="interaction">
    <interactant intactId="EBI-359793">
        <id>P40222</id>
    </interactant>
    <interactant intactId="EBI-11737646">
        <id>Q5TAP6</id>
        <label>UTP14C</label>
    </interactant>
    <organismsDiffer>false</organismsDiffer>
    <experiments>3</experiments>
</comment>
<comment type="interaction">
    <interactant intactId="EBI-359793">
        <id>P40222</id>
    </interactant>
    <interactant intactId="EBI-2799833">
        <id>Q8N1B4</id>
        <label>VPS52</label>
    </interactant>
    <organismsDiffer>false</organismsDiffer>
    <experiments>7</experiments>
</comment>
<comment type="interaction">
    <interactant intactId="EBI-359793">
        <id>P40222</id>
    </interactant>
    <interactant intactId="EBI-712969">
        <id>Q9Y3C0</id>
        <label>WASHC3</label>
    </interactant>
    <organismsDiffer>false</organismsDiffer>
    <experiments>8</experiments>
</comment>
<comment type="interaction">
    <interactant intactId="EBI-359793">
        <id>P40222</id>
    </interactant>
    <interactant intactId="EBI-6115874">
        <id>Q9QYP6</id>
        <label>Azi2</label>
    </interactant>
    <organismsDiffer>true</organismsDiffer>
    <experiments>2</experiments>
</comment>
<comment type="tissue specificity">
    <text evidence="3">Ubiquitous, with much higher expression in heart, kidney, liver and pancreas.</text>
</comment>
<comment type="similarity">
    <text evidence="5">Belongs to the taxilin family.</text>
</comment>
<comment type="caution">
    <text evidence="6">Was originally thought to be a high molecular weight interleukin (IL-14 or IL14).</text>
</comment>
<comment type="sequence caution" evidence="5">
    <conflict type="erroneous initiation">
        <sequence resource="EMBL-CDS" id="AAH46565"/>
    </conflict>
</comment>
<accession>P40222</accession>
<accession>D3DPP6</accession>
<accession>Q5TFJ6</accession>
<accession>Q66K62</accession>
<accession>Q86T54</accession>
<accession>Q86T85</accession>
<accession>Q86T86</accession>
<accession>Q86Y86</accession>
<accession>Q86YW3</accession>
<accession>Q8N2Y3</accession>
<sequence length="546" mass="61891">MKNQDKKNGAAKQSNPKSSPGQPEAGPEGAQERPSQAAPAVEAEGPGSSQAPRKPEGAQARTAQSGALRDVSEELSRQLEDILSTYCVDNNQGGPGEDGAQGEPAEPEDAEKSRTYVARNGEPEPTPVVNGEKEPSKGDPNTEEIRQSDEVGDRDHRRPQEKKKAKGLGKEITLLMQTLNTLSTPEEKLAALCKKYAELLEEHRNSQKQMKLLQKKQSQLVQEKDHLRGEHSKAVLARSKLESLCRELQRHNRSLKEEGVQRAREEEEKRKEVTSHFQVTLNDIQLQMEQHNERNSKLRQENMELAERLKKLIEQYELREEHIDKVFKHKDLQQQLVDAKLQQAQEMLKEAEERHQREKDFLLKEAVESQRMCELMKQQETHLKQQLALYTEKFEEFQNTLSKSSEVFTTFKQEMEKMTKKIKKLEKETTMYRSRWESSNKALLEMAEEKTVRDKELEGLQVKIQRLEKLCRALQTERNDLNKRVQDLSAGGQGSLTDSGPERRPEGPGAQAPSSPRVTEAPCYPGAPSTEASGQTGPQEPTSARA</sequence>
<protein>
    <recommendedName>
        <fullName>Alpha-taxilin</fullName>
    </recommendedName>
</protein>
<feature type="chain" id="PRO_0000189421" description="Alpha-taxilin">
    <location>
        <begin position="1"/>
        <end position="546"/>
    </location>
</feature>
<feature type="region of interest" description="Disordered" evidence="2">
    <location>
        <begin position="1"/>
        <end position="170"/>
    </location>
</feature>
<feature type="region of interest" description="Disordered" evidence="2">
    <location>
        <begin position="482"/>
        <end position="546"/>
    </location>
</feature>
<feature type="coiled-coil region" evidence="1">
    <location>
        <begin position="186"/>
        <end position="491"/>
    </location>
</feature>
<feature type="compositionally biased region" description="Polar residues" evidence="2">
    <location>
        <begin position="11"/>
        <end position="21"/>
    </location>
</feature>
<feature type="compositionally biased region" description="Basic and acidic residues" evidence="2">
    <location>
        <begin position="70"/>
        <end position="80"/>
    </location>
</feature>
<feature type="compositionally biased region" description="Basic and acidic residues" evidence="2">
    <location>
        <begin position="143"/>
        <end position="158"/>
    </location>
</feature>
<feature type="compositionally biased region" description="Polar residues" evidence="2">
    <location>
        <begin position="530"/>
        <end position="546"/>
    </location>
</feature>
<feature type="modified residue" description="Phosphoserine" evidence="11">
    <location>
        <position position="72"/>
    </location>
</feature>
<feature type="modified residue" description="Phosphoserine" evidence="7 8 9 10 11 12">
    <location>
        <position position="515"/>
    </location>
</feature>
<feature type="sequence conflict" description="In Ref. 2; CAD89951." evidence="5" ref="2">
    <original>K</original>
    <variation>Q</variation>
    <location>
        <position position="12"/>
    </location>
</feature>
<feature type="sequence conflict" description="In Ref. 2; CAD89952." evidence="5" ref="2">
    <original>K</original>
    <variation>R</variation>
    <location>
        <position position="194"/>
    </location>
</feature>
<feature type="sequence conflict" description="In Ref. 5; AAH80578." evidence="5" ref="5">
    <original>R</original>
    <variation>C</variation>
    <location>
        <position position="228"/>
    </location>
</feature>
<feature type="sequence conflict" description="In Ref. 6." evidence="5" ref="6">
    <original>QR</original>
    <variation>HG</variation>
    <location>
        <begin position="249"/>
        <end position="250"/>
    </location>
</feature>
<feature type="sequence conflict" description="In Ref. 2; CAD89952." evidence="5" ref="2">
    <original>Q</original>
    <variation>L</variation>
    <location>
        <position position="278"/>
    </location>
</feature>
<feature type="sequence conflict" description="In Ref. 2; CAD89952." evidence="5" ref="2">
    <original>E</original>
    <variation>A</variation>
    <location>
        <position position="368"/>
    </location>
</feature>
<feature type="sequence conflict" description="In Ref. 2; CAD89951." evidence="5" ref="2">
    <original>K</original>
    <variation>E</variation>
    <location>
        <position position="412"/>
    </location>
</feature>
<feature type="sequence conflict" description="In Ref. 2; CAD91138." evidence="5" ref="2">
    <original>T</original>
    <variation>A</variation>
    <location>
        <position position="530"/>
    </location>
</feature>
<name>TXLNA_HUMAN</name>
<gene>
    <name type="primary">TXLNA</name>
    <name type="synonym">TXLN</name>
</gene>